<comment type="function">
    <text evidence="4 5">Component of the mst2 complex which is a highly specific H3 lysine 14 (H3K14) acetyltransferase that functions together with gcn5 to regulate global levels of H3K14 acetylation (H3K14ac), critical for DNA damage checkpoint activation. Negatively regulates telomere silencing. Telomere silencing is increased due to histone hypoacetylation and/or an increase in the ratio of methylated histones to acetylated histones. Telomeric histone acetylation contributes to normal meiotic progression.</text>
</comment>
<comment type="catalytic activity">
    <reaction evidence="2">
        <text>L-lysyl-[protein] + acetyl-CoA = N(6)-acetyl-L-lysyl-[protein] + CoA + H(+)</text>
        <dbReference type="Rhea" id="RHEA:45948"/>
        <dbReference type="Rhea" id="RHEA-COMP:9752"/>
        <dbReference type="Rhea" id="RHEA-COMP:10731"/>
        <dbReference type="ChEBI" id="CHEBI:15378"/>
        <dbReference type="ChEBI" id="CHEBI:29969"/>
        <dbReference type="ChEBI" id="CHEBI:57287"/>
        <dbReference type="ChEBI" id="CHEBI:57288"/>
        <dbReference type="ChEBI" id="CHEBI:61930"/>
        <dbReference type="EC" id="2.3.1.48"/>
    </reaction>
</comment>
<comment type="subunit">
    <text evidence="5">Component of the mst2 complex composed of at least eaf6, mst2, nto1, pdp3, ptf1, ptf2 and tfg3.</text>
</comment>
<comment type="subcellular location">
    <subcellularLocation>
        <location>Cytoplasm</location>
    </subcellularLocation>
    <subcellularLocation>
        <location>Nucleus</location>
    </subcellularLocation>
</comment>
<comment type="PTM">
    <text evidence="2">Autoacetylation at Lys-198 is required for proper function.</text>
</comment>
<comment type="similarity">
    <text evidence="6">Belongs to the MYST (SAS/MOZ) family.</text>
</comment>
<dbReference type="EC" id="2.3.1.48" evidence="2"/>
<dbReference type="EMBL" id="CU329670">
    <property type="protein sequence ID" value="CAA93696.1"/>
    <property type="molecule type" value="Genomic_DNA"/>
</dbReference>
<dbReference type="PIR" id="T37865">
    <property type="entry name" value="T37865"/>
</dbReference>
<dbReference type="RefSeq" id="NP_593736.1">
    <property type="nucleotide sequence ID" value="NM_001019167.2"/>
</dbReference>
<dbReference type="SMR" id="Q10325"/>
<dbReference type="BioGRID" id="278645">
    <property type="interactions" value="110"/>
</dbReference>
<dbReference type="STRING" id="284812.Q10325"/>
<dbReference type="iPTMnet" id="Q10325"/>
<dbReference type="PaxDb" id="4896-SPAC17G8.13c.1"/>
<dbReference type="EnsemblFungi" id="SPAC17G8.13c.1">
    <property type="protein sequence ID" value="SPAC17G8.13c.1:pep"/>
    <property type="gene ID" value="SPAC17G8.13c"/>
</dbReference>
<dbReference type="GeneID" id="2542170"/>
<dbReference type="KEGG" id="spo:2542170"/>
<dbReference type="PomBase" id="SPAC17G8.13c">
    <property type="gene designation" value="mst2"/>
</dbReference>
<dbReference type="VEuPathDB" id="FungiDB:SPAC17G8.13c"/>
<dbReference type="eggNOG" id="KOG2747">
    <property type="taxonomic scope" value="Eukaryota"/>
</dbReference>
<dbReference type="HOGENOM" id="CLU_011815_2_2_1"/>
<dbReference type="InParanoid" id="Q10325"/>
<dbReference type="PhylomeDB" id="Q10325"/>
<dbReference type="Reactome" id="R-SPO-3214847">
    <property type="pathway name" value="HATs acetylate histones"/>
</dbReference>
<dbReference type="Reactome" id="R-SPO-6804758">
    <property type="pathway name" value="Regulation of TP53 Activity through Acetylation"/>
</dbReference>
<dbReference type="PRO" id="PR:Q10325"/>
<dbReference type="Proteomes" id="UP000002485">
    <property type="component" value="Chromosome I"/>
</dbReference>
<dbReference type="GO" id="GO:0000785">
    <property type="term" value="C:chromatin"/>
    <property type="evidence" value="ECO:0000318"/>
    <property type="project" value="GO_Central"/>
</dbReference>
<dbReference type="GO" id="GO:0005829">
    <property type="term" value="C:cytosol"/>
    <property type="evidence" value="ECO:0007005"/>
    <property type="project" value="PomBase"/>
</dbReference>
<dbReference type="GO" id="GO:0036410">
    <property type="term" value="C:Mst2 histone acetyltransferase complex"/>
    <property type="evidence" value="ECO:0000304"/>
    <property type="project" value="PomBase"/>
</dbReference>
<dbReference type="GO" id="GO:1990467">
    <property type="term" value="C:NuA3a histone acetyltransferase complex"/>
    <property type="evidence" value="ECO:0000318"/>
    <property type="project" value="GO_Central"/>
</dbReference>
<dbReference type="GO" id="GO:0005634">
    <property type="term" value="C:nucleus"/>
    <property type="evidence" value="ECO:0007005"/>
    <property type="project" value="PomBase"/>
</dbReference>
<dbReference type="GO" id="GO:0003682">
    <property type="term" value="F:chromatin binding"/>
    <property type="evidence" value="ECO:0000318"/>
    <property type="project" value="GO_Central"/>
</dbReference>
<dbReference type="GO" id="GO:0004402">
    <property type="term" value="F:histone acetyltransferase activity"/>
    <property type="evidence" value="ECO:0000318"/>
    <property type="project" value="GO_Central"/>
</dbReference>
<dbReference type="GO" id="GO:0036408">
    <property type="term" value="F:histone H3K14 acetyltransferase activity"/>
    <property type="evidence" value="ECO:0000304"/>
    <property type="project" value="PomBase"/>
</dbReference>
<dbReference type="GO" id="GO:0003712">
    <property type="term" value="F:transcription coregulator activity"/>
    <property type="evidence" value="ECO:0000318"/>
    <property type="project" value="GO_Central"/>
</dbReference>
<dbReference type="GO" id="GO:0008270">
    <property type="term" value="F:zinc ion binding"/>
    <property type="evidence" value="ECO:0007669"/>
    <property type="project" value="UniProtKB-KW"/>
</dbReference>
<dbReference type="GO" id="GO:0006974">
    <property type="term" value="P:DNA damage response"/>
    <property type="evidence" value="ECO:0007669"/>
    <property type="project" value="UniProtKB-KW"/>
</dbReference>
<dbReference type="GO" id="GO:0033696">
    <property type="term" value="P:heterochromatin boundary formation"/>
    <property type="evidence" value="ECO:0000316"/>
    <property type="project" value="PomBase"/>
</dbReference>
<dbReference type="GO" id="GO:0031507">
    <property type="term" value="P:heterochromatin formation"/>
    <property type="evidence" value="ECO:0000316"/>
    <property type="project" value="PomBase"/>
</dbReference>
<dbReference type="GO" id="GO:0006357">
    <property type="term" value="P:regulation of transcription by RNA polymerase II"/>
    <property type="evidence" value="ECO:0000318"/>
    <property type="project" value="GO_Central"/>
</dbReference>
<dbReference type="FunFam" id="3.30.60.60:FF:000001">
    <property type="entry name" value="Histone acetyltransferase"/>
    <property type="match status" value="1"/>
</dbReference>
<dbReference type="FunFam" id="3.40.630.30:FF:000001">
    <property type="entry name" value="Histone acetyltransferase"/>
    <property type="match status" value="1"/>
</dbReference>
<dbReference type="Gene3D" id="3.40.630.30">
    <property type="match status" value="1"/>
</dbReference>
<dbReference type="Gene3D" id="3.30.60.60">
    <property type="entry name" value="N-acetyl transferase-like"/>
    <property type="match status" value="1"/>
</dbReference>
<dbReference type="Gene3D" id="1.10.10.10">
    <property type="entry name" value="Winged helix-like DNA-binding domain superfamily/Winged helix DNA-binding domain"/>
    <property type="match status" value="1"/>
</dbReference>
<dbReference type="InterPro" id="IPR016181">
    <property type="entry name" value="Acyl_CoA_acyltransferase"/>
</dbReference>
<dbReference type="InterPro" id="IPR002717">
    <property type="entry name" value="HAT_MYST-type"/>
</dbReference>
<dbReference type="InterPro" id="IPR050603">
    <property type="entry name" value="MYST_HAT"/>
</dbReference>
<dbReference type="InterPro" id="IPR036388">
    <property type="entry name" value="WH-like_DNA-bd_sf"/>
</dbReference>
<dbReference type="InterPro" id="IPR040706">
    <property type="entry name" value="Zf-MYST"/>
</dbReference>
<dbReference type="PANTHER" id="PTHR10615">
    <property type="entry name" value="HISTONE ACETYLTRANSFERASE"/>
    <property type="match status" value="1"/>
</dbReference>
<dbReference type="PANTHER" id="PTHR10615:SF161">
    <property type="entry name" value="HISTONE ACETYLTRANSFERASE KAT7"/>
    <property type="match status" value="1"/>
</dbReference>
<dbReference type="Pfam" id="PF01853">
    <property type="entry name" value="MOZ_SAS"/>
    <property type="match status" value="1"/>
</dbReference>
<dbReference type="Pfam" id="PF17772">
    <property type="entry name" value="zf-MYST"/>
    <property type="match status" value="1"/>
</dbReference>
<dbReference type="SUPFAM" id="SSF55729">
    <property type="entry name" value="Acyl-CoA N-acyltransferases (Nat)"/>
    <property type="match status" value="1"/>
</dbReference>
<dbReference type="PROSITE" id="PS51726">
    <property type="entry name" value="MYST_HAT"/>
    <property type="match status" value="1"/>
</dbReference>
<name>MST2_SCHPO</name>
<sequence length="407" mass="47275">MPATILKSTASSKTLLIIKFDTNSSRYPFYKKHLLELNSESTFLGLLTKGQADTSITRLNQDDVRLFEKAKTVADRTKDVAYSFSDPILSTQLRTPPPQPTSIRYLYFGTYRIKPWYTSPYPEEYSCAKNLYICESCLKYMNSDHVLQRHKMKCSWSYPPGDEIYRDKNISIFEVDGQRQPIYCQNLCLLAKMFLHSKMLYYDVEPFLFYVLTEFDGQECKVIGYFSKEKRSASDYNVSCILTLPIYQRRGYGVFLIDFSYLLTQVEGKLGSPEKPLSDLGLVTYRSYWKMRVAKALLEITTPISINAIAKSTSMVCDDVISTLESLSVFKYDPLKKKYVLQLKRDELENVYKAWNIKHPQRVNPKLLRWTPYLGEEQISNLLLKENILIPLPQKRLLDNSHHLDSV</sequence>
<evidence type="ECO:0000250" key="1"/>
<evidence type="ECO:0000250" key="2">
    <source>
        <dbReference type="UniProtKB" id="Q9H7Z6"/>
    </source>
</evidence>
<evidence type="ECO:0000255" key="3">
    <source>
        <dbReference type="PROSITE-ProRule" id="PRU01063"/>
    </source>
</evidence>
<evidence type="ECO:0000269" key="4">
    <source>
    </source>
</evidence>
<evidence type="ECO:0000269" key="5">
    <source>
    </source>
</evidence>
<evidence type="ECO:0000305" key="6"/>
<reference key="1">
    <citation type="journal article" date="2002" name="Nature">
        <title>The genome sequence of Schizosaccharomyces pombe.</title>
        <authorList>
            <person name="Wood V."/>
            <person name="Gwilliam R."/>
            <person name="Rajandream M.A."/>
            <person name="Lyne M.H."/>
            <person name="Lyne R."/>
            <person name="Stewart A."/>
            <person name="Sgouros J.G."/>
            <person name="Peat N."/>
            <person name="Hayles J."/>
            <person name="Baker S.G."/>
            <person name="Basham D."/>
            <person name="Bowman S."/>
            <person name="Brooks K."/>
            <person name="Brown D."/>
            <person name="Brown S."/>
            <person name="Chillingworth T."/>
            <person name="Churcher C.M."/>
            <person name="Collins M."/>
            <person name="Connor R."/>
            <person name="Cronin A."/>
            <person name="Davis P."/>
            <person name="Feltwell T."/>
            <person name="Fraser A."/>
            <person name="Gentles S."/>
            <person name="Goble A."/>
            <person name="Hamlin N."/>
            <person name="Harris D.E."/>
            <person name="Hidalgo J."/>
            <person name="Hodgson G."/>
            <person name="Holroyd S."/>
            <person name="Hornsby T."/>
            <person name="Howarth S."/>
            <person name="Huckle E.J."/>
            <person name="Hunt S."/>
            <person name="Jagels K."/>
            <person name="James K.D."/>
            <person name="Jones L."/>
            <person name="Jones M."/>
            <person name="Leather S."/>
            <person name="McDonald S."/>
            <person name="McLean J."/>
            <person name="Mooney P."/>
            <person name="Moule S."/>
            <person name="Mungall K.L."/>
            <person name="Murphy L.D."/>
            <person name="Niblett D."/>
            <person name="Odell C."/>
            <person name="Oliver K."/>
            <person name="O'Neil S."/>
            <person name="Pearson D."/>
            <person name="Quail M.A."/>
            <person name="Rabbinowitsch E."/>
            <person name="Rutherford K.M."/>
            <person name="Rutter S."/>
            <person name="Saunders D."/>
            <person name="Seeger K."/>
            <person name="Sharp S."/>
            <person name="Skelton J."/>
            <person name="Simmonds M.N."/>
            <person name="Squares R."/>
            <person name="Squares S."/>
            <person name="Stevens K."/>
            <person name="Taylor K."/>
            <person name="Taylor R.G."/>
            <person name="Tivey A."/>
            <person name="Walsh S.V."/>
            <person name="Warren T."/>
            <person name="Whitehead S."/>
            <person name="Woodward J.R."/>
            <person name="Volckaert G."/>
            <person name="Aert R."/>
            <person name="Robben J."/>
            <person name="Grymonprez B."/>
            <person name="Weltjens I."/>
            <person name="Vanstreels E."/>
            <person name="Rieger M."/>
            <person name="Schaefer M."/>
            <person name="Mueller-Auer S."/>
            <person name="Gabel C."/>
            <person name="Fuchs M."/>
            <person name="Duesterhoeft A."/>
            <person name="Fritzc C."/>
            <person name="Holzer E."/>
            <person name="Moestl D."/>
            <person name="Hilbert H."/>
            <person name="Borzym K."/>
            <person name="Langer I."/>
            <person name="Beck A."/>
            <person name="Lehrach H."/>
            <person name="Reinhardt R."/>
            <person name="Pohl T.M."/>
            <person name="Eger P."/>
            <person name="Zimmermann W."/>
            <person name="Wedler H."/>
            <person name="Wambutt R."/>
            <person name="Purnelle B."/>
            <person name="Goffeau A."/>
            <person name="Cadieu E."/>
            <person name="Dreano S."/>
            <person name="Gloux S."/>
            <person name="Lelaure V."/>
            <person name="Mottier S."/>
            <person name="Galibert F."/>
            <person name="Aves S.J."/>
            <person name="Xiang Z."/>
            <person name="Hunt C."/>
            <person name="Moore K."/>
            <person name="Hurst S.M."/>
            <person name="Lucas M."/>
            <person name="Rochet M."/>
            <person name="Gaillardin C."/>
            <person name="Tallada V.A."/>
            <person name="Garzon A."/>
            <person name="Thode G."/>
            <person name="Daga R.R."/>
            <person name="Cruzado L."/>
            <person name="Jimenez J."/>
            <person name="Sanchez M."/>
            <person name="del Rey F."/>
            <person name="Benito J."/>
            <person name="Dominguez A."/>
            <person name="Revuelta J.L."/>
            <person name="Moreno S."/>
            <person name="Armstrong J."/>
            <person name="Forsburg S.L."/>
            <person name="Cerutti L."/>
            <person name="Lowe T."/>
            <person name="McCombie W.R."/>
            <person name="Paulsen I."/>
            <person name="Potashkin J."/>
            <person name="Shpakovski G.V."/>
            <person name="Ussery D."/>
            <person name="Barrell B.G."/>
            <person name="Nurse P."/>
        </authorList>
    </citation>
    <scope>NUCLEOTIDE SEQUENCE [LARGE SCALE GENOMIC DNA]</scope>
    <source>
        <strain>972 / ATCC 24843</strain>
    </source>
</reference>
<reference key="2">
    <citation type="journal article" date="2005" name="Mol. Cell. Biol.">
        <title>Schizosaccharomyces pombe mst2+ encodes a MYST family histone acetyltransferase that negatively regulates telomere silencing.</title>
        <authorList>
            <person name="Gomez E.B."/>
            <person name="Espinosa J.M."/>
            <person name="Forsburg S.L."/>
        </authorList>
    </citation>
    <scope>FUNCTION</scope>
    <scope>SUBCELLULAR LOCATION</scope>
</reference>
<reference key="3">
    <citation type="journal article" date="2012" name="J. Biol. Chem.">
        <title>Histone H3 lysine 14 acetylation is required for activation of a DNA damage checkpoint in fission yeast.</title>
        <authorList>
            <person name="Wang Y."/>
            <person name="Kallgren S.P."/>
            <person name="Reddy B.D."/>
            <person name="Kuntz K."/>
            <person name="Lopez-Maury L."/>
            <person name="Thompson J."/>
            <person name="Watt S."/>
            <person name="Ma C."/>
            <person name="Hou H."/>
            <person name="Shi Y."/>
            <person name="Yates J.R. III"/>
            <person name="Bahler J."/>
            <person name="O'Connell M.J."/>
            <person name="Jia S."/>
        </authorList>
    </citation>
    <scope>IDENTIFICATION BY MASS SPECTROMETRY</scope>
    <scope>IDENTIFICATION IN THE MST2 COMPLEX</scope>
    <scope>FUNCTION</scope>
</reference>
<reference key="4">
    <citation type="journal article" date="2006" name="Nat. Biotechnol.">
        <title>ORFeome cloning and global analysis of protein localization in the fission yeast Schizosaccharomyces pombe.</title>
        <authorList>
            <person name="Matsuyama A."/>
            <person name="Arai R."/>
            <person name="Yashiroda Y."/>
            <person name="Shirai A."/>
            <person name="Kamata A."/>
            <person name="Sekido S."/>
            <person name="Kobayashi Y."/>
            <person name="Hashimoto A."/>
            <person name="Hamamoto M."/>
            <person name="Hiraoka Y."/>
            <person name="Horinouchi S."/>
            <person name="Yoshida M."/>
        </authorList>
    </citation>
    <scope>SUBCELLULAR LOCATION [LARGE SCALE ANALYSIS]</scope>
</reference>
<protein>
    <recommendedName>
        <fullName>Histone acetyltransferase mst2</fullName>
        <ecNumber evidence="2">2.3.1.48</ecNumber>
    </recommendedName>
</protein>
<feature type="chain" id="PRO_0000051565" description="Histone acetyltransferase mst2">
    <location>
        <begin position="1"/>
        <end position="407"/>
    </location>
</feature>
<feature type="domain" description="MYST-type HAT" evidence="3">
    <location>
        <begin position="98"/>
        <end position="372"/>
    </location>
</feature>
<feature type="zinc finger region" description="C2HC MYST-type" evidence="3">
    <location>
        <begin position="131"/>
        <end position="156"/>
    </location>
</feature>
<feature type="active site" description="Proton donor/acceptor" evidence="2">
    <location>
        <position position="274"/>
    </location>
</feature>
<feature type="binding site" evidence="2">
    <location>
        <begin position="241"/>
        <end position="243"/>
    </location>
    <ligand>
        <name>acetyl-CoA</name>
        <dbReference type="ChEBI" id="CHEBI:57288"/>
    </ligand>
</feature>
<feature type="binding site" evidence="1">
    <location>
        <position position="243"/>
    </location>
    <ligand>
        <name>acetyl-CoA</name>
        <dbReference type="ChEBI" id="CHEBI:57288"/>
    </ligand>
</feature>
<feature type="binding site" evidence="2">
    <location>
        <begin position="248"/>
        <end position="254"/>
    </location>
    <ligand>
        <name>acetyl-CoA</name>
        <dbReference type="ChEBI" id="CHEBI:57288"/>
    </ligand>
</feature>
<feature type="binding site" evidence="2">
    <location>
        <position position="278"/>
    </location>
    <ligand>
        <name>acetyl-CoA</name>
        <dbReference type="ChEBI" id="CHEBI:57288"/>
    </ligand>
</feature>
<feature type="binding site" evidence="2">
    <location>
        <position position="287"/>
    </location>
    <ligand>
        <name>acetyl-CoA</name>
        <dbReference type="ChEBI" id="CHEBI:57288"/>
    </ligand>
</feature>
<feature type="modified residue" description="N6-acetyllysine; by autocatalysis" evidence="2">
    <location>
        <position position="198"/>
    </location>
</feature>
<gene>
    <name type="primary">mst2</name>
    <name type="ORF">SPAC17G8.13c</name>
</gene>
<accession>Q10325</accession>
<organism>
    <name type="scientific">Schizosaccharomyces pombe (strain 972 / ATCC 24843)</name>
    <name type="common">Fission yeast</name>
    <dbReference type="NCBI Taxonomy" id="284812"/>
    <lineage>
        <taxon>Eukaryota</taxon>
        <taxon>Fungi</taxon>
        <taxon>Dikarya</taxon>
        <taxon>Ascomycota</taxon>
        <taxon>Taphrinomycotina</taxon>
        <taxon>Schizosaccharomycetes</taxon>
        <taxon>Schizosaccharomycetales</taxon>
        <taxon>Schizosaccharomycetaceae</taxon>
        <taxon>Schizosaccharomyces</taxon>
    </lineage>
</organism>
<keyword id="KW-0007">Acetylation</keyword>
<keyword id="KW-0156">Chromatin regulator</keyword>
<keyword id="KW-0963">Cytoplasm</keyword>
<keyword id="KW-0227">DNA damage</keyword>
<keyword id="KW-0479">Metal-binding</keyword>
<keyword id="KW-0539">Nucleus</keyword>
<keyword id="KW-1185">Reference proteome</keyword>
<keyword id="KW-0808">Transferase</keyword>
<keyword id="KW-0862">Zinc</keyword>
<keyword id="KW-0863">Zinc-finger</keyword>
<proteinExistence type="evidence at protein level"/>